<dbReference type="EC" id="1.14.11.-"/>
<dbReference type="EMBL" id="FO081255">
    <property type="protein sequence ID" value="CCD70224.1"/>
    <property type="molecule type" value="Genomic_DNA"/>
</dbReference>
<dbReference type="EMBL" id="FO081255">
    <property type="protein sequence ID" value="CCD70225.1"/>
    <property type="molecule type" value="Genomic_DNA"/>
</dbReference>
<dbReference type="PIR" id="T29935">
    <property type="entry name" value="T29935"/>
</dbReference>
<dbReference type="RefSeq" id="NP_500610.1">
    <molecule id="Q9GYI0-1"/>
    <property type="nucleotide sequence ID" value="NM_068209.7"/>
</dbReference>
<dbReference type="RefSeq" id="NP_500611.1">
    <molecule id="Q9GYI0-2"/>
    <property type="nucleotide sequence ID" value="NM_068210.5"/>
</dbReference>
<dbReference type="PDB" id="3N9L">
    <property type="method" value="X-ray"/>
    <property type="resolution" value="2.80 A"/>
    <property type="chains" value="A=201-724"/>
</dbReference>
<dbReference type="PDB" id="3N9M">
    <property type="method" value="X-ray"/>
    <property type="resolution" value="2.49 A"/>
    <property type="chains" value="A/C=201-724"/>
</dbReference>
<dbReference type="PDB" id="3N9N">
    <property type="method" value="X-ray"/>
    <property type="resolution" value="2.30 A"/>
    <property type="chains" value="A=201-724"/>
</dbReference>
<dbReference type="PDB" id="3N9O">
    <property type="method" value="X-ray"/>
    <property type="resolution" value="2.31 A"/>
    <property type="chains" value="A=201-724"/>
</dbReference>
<dbReference type="PDB" id="3N9P">
    <property type="method" value="X-ray"/>
    <property type="resolution" value="2.39 A"/>
    <property type="chains" value="A=201-724"/>
</dbReference>
<dbReference type="PDB" id="3N9Q">
    <property type="method" value="X-ray"/>
    <property type="resolution" value="2.30 A"/>
    <property type="chains" value="A=201-724"/>
</dbReference>
<dbReference type="PDB" id="3PUQ">
    <property type="method" value="X-ray"/>
    <property type="resolution" value="2.25 A"/>
    <property type="chains" value="A/C=201-724"/>
</dbReference>
<dbReference type="PDB" id="3PUR">
    <property type="method" value="X-ray"/>
    <property type="resolution" value="2.10 A"/>
    <property type="chains" value="A/C=201-724"/>
</dbReference>
<dbReference type="PDBsum" id="3N9L"/>
<dbReference type="PDBsum" id="3N9M"/>
<dbReference type="PDBsum" id="3N9N"/>
<dbReference type="PDBsum" id="3N9O"/>
<dbReference type="PDBsum" id="3N9P"/>
<dbReference type="PDBsum" id="3N9Q"/>
<dbReference type="PDBsum" id="3PUQ"/>
<dbReference type="PDBsum" id="3PUR"/>
<dbReference type="SMR" id="Q9GYI0"/>
<dbReference type="FunCoup" id="Q9GYI0">
    <property type="interactions" value="1065"/>
</dbReference>
<dbReference type="IntAct" id="Q9GYI0">
    <property type="interactions" value="2"/>
</dbReference>
<dbReference type="STRING" id="6239.F29B9.2c.1"/>
<dbReference type="PaxDb" id="6239-F29B9.2c"/>
<dbReference type="PeptideAtlas" id="Q9GYI0"/>
<dbReference type="EnsemblMetazoa" id="F29B9.2a.1">
    <molecule id="Q9GYI0-1"/>
    <property type="protein sequence ID" value="F29B9.2a.1"/>
    <property type="gene ID" value="WBGene00017920"/>
</dbReference>
<dbReference type="EnsemblMetazoa" id="F29B9.2b.1">
    <molecule id="Q9GYI0-2"/>
    <property type="protein sequence ID" value="F29B9.2b.1"/>
    <property type="gene ID" value="WBGene00017920"/>
</dbReference>
<dbReference type="GeneID" id="177232"/>
<dbReference type="KEGG" id="cel:CELE_F29B9.2"/>
<dbReference type="UCSC" id="F29B9.2a">
    <property type="organism name" value="c. elegans"/>
</dbReference>
<dbReference type="AGR" id="WB:WBGene00017920"/>
<dbReference type="CTD" id="177232"/>
<dbReference type="WormBase" id="F29B9.2a">
    <molecule id="Q9GYI0-1"/>
    <property type="protein sequence ID" value="CE09781"/>
    <property type="gene ID" value="WBGene00017920"/>
    <property type="gene designation" value="jmjd-1.2"/>
</dbReference>
<dbReference type="WormBase" id="F29B9.2b">
    <molecule id="Q9GYI0-2"/>
    <property type="protein sequence ID" value="CE27145"/>
    <property type="gene ID" value="WBGene00017920"/>
    <property type="gene designation" value="jmjd-1.2"/>
</dbReference>
<dbReference type="eggNOG" id="KOG1633">
    <property type="taxonomic scope" value="Eukaryota"/>
</dbReference>
<dbReference type="InParanoid" id="Q9GYI0"/>
<dbReference type="OrthoDB" id="5876800at2759"/>
<dbReference type="PhylomeDB" id="Q9GYI0"/>
<dbReference type="Reactome" id="R-CEL-2299718">
    <property type="pathway name" value="Condensation of Prophase Chromosomes"/>
</dbReference>
<dbReference type="Reactome" id="R-CEL-3214842">
    <property type="pathway name" value="HDMs demethylate histones"/>
</dbReference>
<dbReference type="EvolutionaryTrace" id="Q9GYI0"/>
<dbReference type="PRO" id="PR:Q9GYI0"/>
<dbReference type="Proteomes" id="UP000001940">
    <property type="component" value="Chromosome IV"/>
</dbReference>
<dbReference type="Bgee" id="WBGene00017920">
    <property type="expression patterns" value="Expressed in embryo and 4 other cell types or tissues"/>
</dbReference>
<dbReference type="ExpressionAtlas" id="Q9GYI0">
    <property type="expression patterns" value="baseline and differential"/>
</dbReference>
<dbReference type="GO" id="GO:0005634">
    <property type="term" value="C:nucleus"/>
    <property type="evidence" value="ECO:0000314"/>
    <property type="project" value="WormBase"/>
</dbReference>
<dbReference type="GO" id="GO:0042393">
    <property type="term" value="F:histone binding"/>
    <property type="evidence" value="ECO:0000314"/>
    <property type="project" value="WormBase"/>
</dbReference>
<dbReference type="GO" id="GO:0032452">
    <property type="term" value="F:histone demethylase activity"/>
    <property type="evidence" value="ECO:0000318"/>
    <property type="project" value="GO_Central"/>
</dbReference>
<dbReference type="GO" id="GO:0071558">
    <property type="term" value="F:histone H3K27me2/H3K27me3 demethylase activity"/>
    <property type="evidence" value="ECO:0000314"/>
    <property type="project" value="WormBase"/>
</dbReference>
<dbReference type="GO" id="GO:0032454">
    <property type="term" value="F:histone H3K9 demethylase activity"/>
    <property type="evidence" value="ECO:0000314"/>
    <property type="project" value="WormBase"/>
</dbReference>
<dbReference type="GO" id="GO:0003712">
    <property type="term" value="F:transcription coregulator activity"/>
    <property type="evidence" value="ECO:0000318"/>
    <property type="project" value="GO_Central"/>
</dbReference>
<dbReference type="GO" id="GO:0008270">
    <property type="term" value="F:zinc ion binding"/>
    <property type="evidence" value="ECO:0007669"/>
    <property type="project" value="UniProtKB-KW"/>
</dbReference>
<dbReference type="GO" id="GO:0006338">
    <property type="term" value="P:chromatin remodeling"/>
    <property type="evidence" value="ECO:0000318"/>
    <property type="project" value="GO_Central"/>
</dbReference>
<dbReference type="GO" id="GO:0034514">
    <property type="term" value="P:mitochondrial unfolded protein response"/>
    <property type="evidence" value="ECO:0000314"/>
    <property type="project" value="WormBase"/>
</dbReference>
<dbReference type="GO" id="GO:0006357">
    <property type="term" value="P:regulation of transcription by RNA polymerase II"/>
    <property type="evidence" value="ECO:0000318"/>
    <property type="project" value="GO_Central"/>
</dbReference>
<dbReference type="CDD" id="cd15517">
    <property type="entry name" value="PHD_TCF19_like"/>
    <property type="match status" value="1"/>
</dbReference>
<dbReference type="Gene3D" id="1.20.58.1360">
    <property type="match status" value="1"/>
</dbReference>
<dbReference type="Gene3D" id="2.60.120.650">
    <property type="entry name" value="Cupin"/>
    <property type="match status" value="1"/>
</dbReference>
<dbReference type="Gene3D" id="3.30.40.10">
    <property type="entry name" value="Zinc/RING finger domain, C3HC4 (zinc finger)"/>
    <property type="match status" value="1"/>
</dbReference>
<dbReference type="InterPro" id="IPR041070">
    <property type="entry name" value="JHD"/>
</dbReference>
<dbReference type="InterPro" id="IPR050690">
    <property type="entry name" value="JHDM1_Histone_Demethylase"/>
</dbReference>
<dbReference type="InterPro" id="IPR003347">
    <property type="entry name" value="JmjC_dom"/>
</dbReference>
<dbReference type="InterPro" id="IPR019786">
    <property type="entry name" value="Zinc_finger_PHD-type_CS"/>
</dbReference>
<dbReference type="InterPro" id="IPR011011">
    <property type="entry name" value="Znf_FYVE_PHD"/>
</dbReference>
<dbReference type="InterPro" id="IPR001965">
    <property type="entry name" value="Znf_PHD"/>
</dbReference>
<dbReference type="InterPro" id="IPR013083">
    <property type="entry name" value="Znf_RING/FYVE/PHD"/>
</dbReference>
<dbReference type="PANTHER" id="PTHR23123">
    <property type="entry name" value="PHD/F-BOX CONTAINING PROTEIN"/>
    <property type="match status" value="1"/>
</dbReference>
<dbReference type="Pfam" id="PF17811">
    <property type="entry name" value="JHD"/>
    <property type="match status" value="1"/>
</dbReference>
<dbReference type="Pfam" id="PF02373">
    <property type="entry name" value="JmjC"/>
    <property type="match status" value="1"/>
</dbReference>
<dbReference type="SMART" id="SM00558">
    <property type="entry name" value="JmjC"/>
    <property type="match status" value="1"/>
</dbReference>
<dbReference type="SMART" id="SM00249">
    <property type="entry name" value="PHD"/>
    <property type="match status" value="1"/>
</dbReference>
<dbReference type="SUPFAM" id="SSF51197">
    <property type="entry name" value="Clavaminate synthase-like"/>
    <property type="match status" value="1"/>
</dbReference>
<dbReference type="SUPFAM" id="SSF57903">
    <property type="entry name" value="FYVE/PHD zinc finger"/>
    <property type="match status" value="1"/>
</dbReference>
<dbReference type="PROSITE" id="PS51184">
    <property type="entry name" value="JMJC"/>
    <property type="match status" value="1"/>
</dbReference>
<dbReference type="PROSITE" id="PS01359">
    <property type="entry name" value="ZF_PHD_1"/>
    <property type="match status" value="1"/>
</dbReference>
<proteinExistence type="evidence at protein level"/>
<organism>
    <name type="scientific">Caenorhabditis elegans</name>
    <dbReference type="NCBI Taxonomy" id="6239"/>
    <lineage>
        <taxon>Eukaryota</taxon>
        <taxon>Metazoa</taxon>
        <taxon>Ecdysozoa</taxon>
        <taxon>Nematoda</taxon>
        <taxon>Chromadorea</taxon>
        <taxon>Rhabditida</taxon>
        <taxon>Rhabditina</taxon>
        <taxon>Rhabditomorpha</taxon>
        <taxon>Rhabditoidea</taxon>
        <taxon>Rhabditidae</taxon>
        <taxon>Peloderinae</taxon>
        <taxon>Caenorhabditis</taxon>
    </lineage>
</organism>
<feature type="chain" id="PRO_0000399813" description="Lysine-specific demethylase 7 homolog">
    <location>
        <begin position="1"/>
        <end position="910"/>
    </location>
</feature>
<feature type="domain" description="JmjC" evidence="1">
    <location>
        <begin position="441"/>
        <end position="612"/>
    </location>
</feature>
<feature type="zinc finger region" description="PHD-type">
    <location>
        <begin position="208"/>
        <end position="290"/>
    </location>
</feature>
<feature type="region of interest" description="Disordered" evidence="2">
    <location>
        <begin position="1"/>
        <end position="58"/>
    </location>
</feature>
<feature type="region of interest" description="Disordered" evidence="2">
    <location>
        <begin position="103"/>
        <end position="162"/>
    </location>
</feature>
<feature type="region of interest" description="Disordered" evidence="2">
    <location>
        <begin position="183"/>
        <end position="212"/>
    </location>
</feature>
<feature type="region of interest" description="Disordered" evidence="2">
    <location>
        <begin position="712"/>
        <end position="790"/>
    </location>
</feature>
<feature type="region of interest" description="Disordered" evidence="2">
    <location>
        <begin position="864"/>
        <end position="910"/>
    </location>
</feature>
<feature type="compositionally biased region" description="Polar residues" evidence="2">
    <location>
        <begin position="1"/>
        <end position="11"/>
    </location>
</feature>
<feature type="compositionally biased region" description="Basic and acidic residues" evidence="2">
    <location>
        <begin position="25"/>
        <end position="35"/>
    </location>
</feature>
<feature type="compositionally biased region" description="Polar residues" evidence="2">
    <location>
        <begin position="43"/>
        <end position="58"/>
    </location>
</feature>
<feature type="compositionally biased region" description="Basic and acidic residues" evidence="2">
    <location>
        <begin position="118"/>
        <end position="130"/>
    </location>
</feature>
<feature type="compositionally biased region" description="Polar residues" evidence="2">
    <location>
        <begin position="150"/>
        <end position="160"/>
    </location>
</feature>
<feature type="compositionally biased region" description="Basic and acidic residues" evidence="2">
    <location>
        <begin position="200"/>
        <end position="210"/>
    </location>
</feature>
<feature type="compositionally biased region" description="Basic residues" evidence="2">
    <location>
        <begin position="748"/>
        <end position="757"/>
    </location>
</feature>
<feature type="compositionally biased region" description="Basic and acidic residues" evidence="2">
    <location>
        <begin position="758"/>
        <end position="780"/>
    </location>
</feature>
<feature type="binding site">
    <location>
        <begin position="505"/>
        <end position="510"/>
    </location>
    <ligand>
        <name>substrate</name>
    </ligand>
</feature>
<feature type="binding site" evidence="1 4 6">
    <location>
        <position position="508"/>
    </location>
    <ligand>
        <name>Fe cation</name>
        <dbReference type="ChEBI" id="CHEBI:24875"/>
        <note>catalytic</note>
    </ligand>
</feature>
<feature type="binding site" evidence="1 4 6">
    <location>
        <position position="510"/>
    </location>
    <ligand>
        <name>Fe cation</name>
        <dbReference type="ChEBI" id="CHEBI:24875"/>
        <note>catalytic</note>
    </ligand>
</feature>
<feature type="binding site" evidence="6">
    <location>
        <position position="518"/>
    </location>
    <ligand>
        <name>substrate</name>
    </ligand>
</feature>
<feature type="binding site" evidence="6">
    <location>
        <position position="525"/>
    </location>
    <ligand>
        <name>substrate</name>
    </ligand>
</feature>
<feature type="binding site" evidence="1 4 6">
    <location>
        <position position="580"/>
    </location>
    <ligand>
        <name>Fe cation</name>
        <dbReference type="ChEBI" id="CHEBI:24875"/>
        <note>catalytic</note>
    </ligand>
</feature>
<feature type="binding site" evidence="6">
    <location>
        <position position="580"/>
    </location>
    <ligand>
        <name>substrate</name>
    </ligand>
</feature>
<feature type="splice variant" id="VSP_039912" description="In isoform b." evidence="8">
    <location>
        <begin position="86"/>
        <end position="98"/>
    </location>
</feature>
<feature type="mutagenesis site" description="Abolishes binding to H3K4me3." evidence="4">
    <original>D</original>
    <variation>A</variation>
    <location>
        <position position="209"/>
    </location>
</feature>
<feature type="mutagenesis site" description="Abolishes binding to H3K4me3." evidence="4">
    <original>W</original>
    <variation>A</variation>
    <location>
        <position position="254"/>
    </location>
</feature>
<feature type="mutagenesis site" description="Abolishes binding to H3K4me3." evidence="4">
    <original>D</original>
    <variation>A</variation>
    <location>
        <position position="258"/>
    </location>
</feature>
<feature type="mutagenesis site" description="Abolishes binding to H3K4me3." evidence="4">
    <original>Q</original>
    <variation>A</variation>
    <location>
        <position position="261"/>
    </location>
</feature>
<feature type="mutagenesis site" description="Abolishes binding to H3K4me3." evidence="4">
    <original>W</original>
    <variation>A</variation>
    <location>
        <position position="263"/>
    </location>
</feature>
<feature type="mutagenesis site" description="Impairs histone methyltransferase activity." evidence="4">
    <original>D</original>
    <variation>A</variation>
    <location>
        <position position="402"/>
    </location>
</feature>
<feature type="mutagenesis site" description="Impairs histone methyltransferase activity." evidence="4">
    <original>Q</original>
    <variation>A</variation>
    <location>
        <position position="409"/>
    </location>
</feature>
<feature type="mutagenesis site" description="Impairs histone methyltransferase activity." evidence="4">
    <original>T</original>
    <variation>A</variation>
    <location>
        <position position="411"/>
    </location>
</feature>
<feature type="mutagenesis site" description="Abolishes histone methyltransferase activity." evidence="4">
    <original>S</original>
    <variation>A</variation>
    <location>
        <position position="437"/>
    </location>
</feature>
<feature type="mutagenesis site" description="Strongly impairs histone methyltransferase activity." evidence="4">
    <original>F</original>
    <variation>A</variation>
    <location>
        <position position="495"/>
    </location>
</feature>
<feature type="mutagenesis site" description="Fails to increase longevity." evidence="7">
    <original>H</original>
    <variation>A</variation>
    <location>
        <position position="508"/>
    </location>
</feature>
<feature type="mutagenesis site" description="Strongly impairs histone methyltransferase activity." evidence="4">
    <original>D</original>
    <variation>A</variation>
    <location>
        <position position="510"/>
    </location>
</feature>
<feature type="mutagenesis site" description="Strongly impairs histone methyltransferase activity." evidence="4">
    <original>Y</original>
    <variation>A</variation>
    <location>
        <position position="518"/>
    </location>
</feature>
<feature type="mutagenesis site" description="Impairs histone methyltransferase activity." evidence="4">
    <original>E</original>
    <variation>A</variation>
    <location>
        <position position="544"/>
    </location>
</feature>
<feature type="mutagenesis site" description="Strongly impairs histone methyltransferase activity." evidence="4">
    <original>N</original>
    <variation>A</variation>
    <location>
        <position position="594"/>
    </location>
</feature>
<feature type="mutagenesis site" description="Abolishes histone methyltransferase activity." evidence="4">
    <original>EKF</original>
    <variation>AAA</variation>
    <location>
        <begin position="622"/>
        <end position="624"/>
    </location>
</feature>
<feature type="helix" evidence="9">
    <location>
        <begin position="207"/>
        <end position="209"/>
    </location>
</feature>
<feature type="turn" evidence="10">
    <location>
        <begin position="212"/>
        <end position="214"/>
    </location>
</feature>
<feature type="turn" evidence="10">
    <location>
        <begin position="244"/>
        <end position="249"/>
    </location>
</feature>
<feature type="strand" evidence="10">
    <location>
        <begin position="253"/>
        <end position="256"/>
    </location>
</feature>
<feature type="turn" evidence="10">
    <location>
        <begin position="258"/>
        <end position="260"/>
    </location>
</feature>
<feature type="strand" evidence="10">
    <location>
        <begin position="263"/>
        <end position="265"/>
    </location>
</feature>
<feature type="helix" evidence="10">
    <location>
        <begin position="266"/>
        <end position="268"/>
    </location>
</feature>
<feature type="helix" evidence="10">
    <location>
        <begin position="273"/>
        <end position="275"/>
    </location>
</feature>
<feature type="turn" evidence="10">
    <location>
        <begin position="276"/>
        <end position="278"/>
    </location>
</feature>
<feature type="strand" evidence="10">
    <location>
        <begin position="279"/>
        <end position="281"/>
    </location>
</feature>
<feature type="turn" evidence="10">
    <location>
        <begin position="285"/>
        <end position="287"/>
    </location>
</feature>
<feature type="helix" evidence="10">
    <location>
        <begin position="288"/>
        <end position="291"/>
    </location>
</feature>
<feature type="strand" evidence="10">
    <location>
        <begin position="304"/>
        <end position="306"/>
    </location>
</feature>
<feature type="helix" evidence="10">
    <location>
        <begin position="310"/>
        <end position="312"/>
    </location>
</feature>
<feature type="helix" evidence="10">
    <location>
        <begin position="322"/>
        <end position="331"/>
    </location>
</feature>
<feature type="helix" evidence="10">
    <location>
        <begin position="332"/>
        <end position="334"/>
    </location>
</feature>
<feature type="turn" evidence="10">
    <location>
        <begin position="340"/>
        <end position="342"/>
    </location>
</feature>
<feature type="strand" evidence="10">
    <location>
        <begin position="343"/>
        <end position="348"/>
    </location>
</feature>
<feature type="helix" evidence="10">
    <location>
        <begin position="349"/>
        <end position="358"/>
    </location>
</feature>
<feature type="helix" evidence="10">
    <location>
        <begin position="362"/>
        <end position="364"/>
    </location>
</feature>
<feature type="strand" evidence="10">
    <location>
        <begin position="367"/>
        <end position="373"/>
    </location>
</feature>
<feature type="helix" evidence="10">
    <location>
        <begin position="388"/>
        <end position="395"/>
    </location>
</feature>
<feature type="strand" evidence="10">
    <location>
        <begin position="400"/>
        <end position="405"/>
    </location>
</feature>
<feature type="turn" evidence="10">
    <location>
        <begin position="406"/>
        <end position="409"/>
    </location>
</feature>
<feature type="strand" evidence="10">
    <location>
        <begin position="410"/>
        <end position="415"/>
    </location>
</feature>
<feature type="helix" evidence="10">
    <location>
        <begin position="416"/>
        <end position="424"/>
    </location>
</feature>
<feature type="strand" evidence="10">
    <location>
        <begin position="433"/>
        <end position="435"/>
    </location>
</feature>
<feature type="helix" evidence="10">
    <location>
        <begin position="446"/>
        <end position="449"/>
    </location>
</feature>
<feature type="helix" evidence="10">
    <location>
        <begin position="454"/>
        <end position="459"/>
    </location>
</feature>
<feature type="helix" evidence="10">
    <location>
        <begin position="461"/>
        <end position="465"/>
    </location>
</feature>
<feature type="helix" evidence="10">
    <location>
        <begin position="474"/>
        <end position="478"/>
    </location>
</feature>
<feature type="strand" evidence="10">
    <location>
        <begin position="479"/>
        <end position="481"/>
    </location>
</feature>
<feature type="helix" evidence="10">
    <location>
        <begin position="486"/>
        <end position="488"/>
    </location>
</feature>
<feature type="strand" evidence="10">
    <location>
        <begin position="493"/>
        <end position="499"/>
    </location>
</feature>
<feature type="strand" evidence="10">
    <location>
        <begin position="503"/>
        <end position="508"/>
    </location>
</feature>
<feature type="helix" evidence="10">
    <location>
        <begin position="511"/>
        <end position="513"/>
    </location>
</feature>
<feature type="strand" evidence="10">
    <location>
        <begin position="515"/>
        <end position="530"/>
    </location>
</feature>
<feature type="helix" evidence="10">
    <location>
        <begin position="534"/>
        <end position="545"/>
    </location>
</feature>
<feature type="helix" evidence="10">
    <location>
        <begin position="553"/>
        <end position="556"/>
    </location>
</feature>
<feature type="turn" evidence="10">
    <location>
        <begin position="557"/>
        <end position="559"/>
    </location>
</feature>
<feature type="strand" evidence="10">
    <location>
        <begin position="562"/>
        <end position="567"/>
    </location>
</feature>
<feature type="strand" evidence="10">
    <location>
        <begin position="571"/>
        <end position="574"/>
    </location>
</feature>
<feature type="strand" evidence="10">
    <location>
        <begin position="579"/>
        <end position="595"/>
    </location>
</feature>
<feature type="helix" evidence="10">
    <location>
        <begin position="598"/>
        <end position="600"/>
    </location>
</feature>
<feature type="helix" evidence="10">
    <location>
        <begin position="601"/>
        <end position="617"/>
    </location>
</feature>
<feature type="helix" evidence="9">
    <location>
        <begin position="622"/>
        <end position="624"/>
    </location>
</feature>
<feature type="helix" evidence="10">
    <location>
        <begin position="629"/>
        <end position="639"/>
    </location>
</feature>
<feature type="helix" evidence="10">
    <location>
        <begin position="641"/>
        <end position="650"/>
    </location>
</feature>
<feature type="helix" evidence="10">
    <location>
        <begin position="656"/>
        <end position="683"/>
    </location>
</feature>
<feature type="helix" evidence="10">
    <location>
        <begin position="693"/>
        <end position="715"/>
    </location>
</feature>
<accession>Q9GYI0</accession>
<accession>Q9BI67</accession>
<sequence>MDGNDINIQKNEFSRDQSALLMMDQHSDHKNHESAIGEPGMSYTASQPALSSTEHQTPLVSEASVAAPQNHLNGNSHESVSEMDRNSVDFAIESVLMKARAYNKMGAPKDPRRKQHNPKSEPKIEPHVTDSSDNQAAMSNKMEAEAPKMESNQNYVSNGSEPPFRFVSISNFDEMKTKKKEVQEELKLEVDSDSEEDDVPEQKTPKESDRCGGCGKFTHEDDLIALEEEKKKEKEKPLMSKKKSHHHKKNDFQWIGCDSCQTWYHFLCSGLEQFEYYLYEKFFCPKCVPHTGHSIRYKVVAPHRYRWYSPNEKHLGIEVGSKTWIEDFITRENTVPSPTDDEVCIVEDGYEFRREFEKLGGADNWGKVFMVKDMDGLNMTMPKPGFDLEDVVKIMGSDYEVDTIDVYNQSTYSMKLDTFRKLFRDTKNRPLLYNFLSLEFSDNNEMKEIAKPPRFVQEISMVNRLWPDVSGAEYIKLLQREEYLPEDQRPKVEQFCLAGMAGSYTDFHVDFGGSSVYYHILKGEKIFYIAAPTEQNFAAYQAHETSPDTTTWFGDIANGAVKRVVIKEGQTLLIPAGWIHAVLTPVDSLVFGGNFLHLGNLEMQMRVYHLENAIRKEIRSEEKFYFPNFELLHWMYMRNVLLEKITEANQEGSDMREQEKNIWTASQIMKAEMERWMDRELRLGPEKNAILPTDDKNKIMISVRKQIEIQTKIQNAKNKPMGLKQKRKSRESAERDDEDYCPSSSTAYKKKYTKKAKKDNDDAPKVKKAKKEEVPEEKVPVPEAAGPSEVTAPLTIKIGMGPTEDQKGVVQIFNNQCTSSGRKVKLNQNVADYCGSHLEARVEEIPEKATKSFRELDNELERCEAVHSGEKIKKVKEPKPPKQPKEKKEKPPPKKKEMSSRDRLMKKLKM</sequence>
<evidence type="ECO:0000255" key="1">
    <source>
        <dbReference type="PROSITE-ProRule" id="PRU00538"/>
    </source>
</evidence>
<evidence type="ECO:0000256" key="2">
    <source>
        <dbReference type="SAM" id="MobiDB-lite"/>
    </source>
</evidence>
<evidence type="ECO:0000269" key="3">
    <source>
    </source>
</evidence>
<evidence type="ECO:0000269" key="4">
    <source>
    </source>
</evidence>
<evidence type="ECO:0000269" key="5">
    <source>
    </source>
</evidence>
<evidence type="ECO:0000269" key="6">
    <source>
    </source>
</evidence>
<evidence type="ECO:0000269" key="7">
    <source>
    </source>
</evidence>
<evidence type="ECO:0000305" key="8"/>
<evidence type="ECO:0007829" key="9">
    <source>
        <dbReference type="PDB" id="3N9N"/>
    </source>
</evidence>
<evidence type="ECO:0007829" key="10">
    <source>
        <dbReference type="PDB" id="3PUR"/>
    </source>
</evidence>
<name>KDM7_CAEEL</name>
<reference key="1">
    <citation type="journal article" date="1998" name="Science">
        <title>Genome sequence of the nematode C. elegans: a platform for investigating biology.</title>
        <authorList>
            <consortium name="The C. elegans sequencing consortium"/>
        </authorList>
    </citation>
    <scope>NUCLEOTIDE SEQUENCE [LARGE SCALE GENOMIC DNA]</scope>
    <source>
        <strain>Bristol N2</strain>
    </source>
</reference>
<reference key="2">
    <citation type="journal article" date="2010" name="Cell Res.">
        <title>Coordinated regulation of active and repressive histone methylations by a dual-specificity histone demethylase ceKDM7A from Caenorhabditis elegans.</title>
        <authorList>
            <person name="Lin H."/>
            <person name="Wang Y."/>
            <person name="Wang Y."/>
            <person name="Tian F."/>
            <person name="Pu P."/>
            <person name="Yu Y."/>
            <person name="Mao H."/>
            <person name="Yang Y."/>
            <person name="Wang P."/>
            <person name="Hu L."/>
            <person name="Lin Y."/>
            <person name="Liu Y."/>
            <person name="Xu Y."/>
            <person name="Chen C.D."/>
        </authorList>
    </citation>
    <scope>FUNCTION</scope>
    <scope>DOMAIN PHD-FINGER</scope>
</reference>
<reference key="3">
    <citation type="journal article" date="2010" name="Mol. Cell">
        <title>A functional link between the histone demethylase PHF8 and the transcription factor ZNF711 in X-linked mental retardation.</title>
        <authorList>
            <person name="Kleine-Kohlbrecher D."/>
            <person name="Christensen J."/>
            <person name="Vandamme J."/>
            <person name="Abarrategui I."/>
            <person name="Bak M."/>
            <person name="Tommerup N."/>
            <person name="Shi X."/>
            <person name="Gozani O."/>
            <person name="Rappsilber J."/>
            <person name="Salcini A.E."/>
            <person name="Helin K."/>
        </authorList>
    </citation>
    <scope>FUNCTION</scope>
    <scope>DISRUPTION PHENOTYPE</scope>
    <scope>SUBCELLULAR LOCATION</scope>
    <scope>TISSUE SPECIFICITY</scope>
</reference>
<reference key="4">
    <citation type="journal article" date="2015" name="Nucleic Acids Res.">
        <title>H3K23me2 is a new heterochromatic mark in Caenorhabditis elegans.</title>
        <authorList>
            <person name="Vandamme J."/>
            <person name="Sidoli S."/>
            <person name="Mariani L."/>
            <person name="Friis C."/>
            <person name="Christensen J."/>
            <person name="Helin K."/>
            <person name="Jensen O.N."/>
            <person name="Salcini A.E."/>
        </authorList>
    </citation>
    <scope>FUNCTION</scope>
</reference>
<reference key="5">
    <citation type="journal article" date="2016" name="Cell">
        <title>Two Conserved Histone Demethylases Regulate Mitochondrial Stress-Induced Longevity.</title>
        <authorList>
            <person name="Merkwirth C."/>
            <person name="Jovaisaite V."/>
            <person name="Durieux J."/>
            <person name="Matilainen O."/>
            <person name="Jordan S.D."/>
            <person name="Quiros P.M."/>
            <person name="Steffen K.K."/>
            <person name="Williams E.G."/>
            <person name="Mouchiroud L."/>
            <person name="Tronnes S.U."/>
            <person name="Murillo V."/>
            <person name="Wolff S.C."/>
            <person name="Shaw R.J."/>
            <person name="Auwerx J."/>
            <person name="Dillin A."/>
        </authorList>
    </citation>
    <scope>FUNCTION</scope>
    <scope>DISRUPTION PHENOTYPE</scope>
    <scope>MUTAGENESIS OF HIS-508</scope>
</reference>
<reference key="6">
    <citation type="journal article" date="2010" name="Cell Res.">
        <title>Structural insights into a dual-specificity histone demethylase ceKDM7A from Caenorhabditis elegans.</title>
        <authorList>
            <person name="Yang Y."/>
            <person name="Hu L."/>
            <person name="Wang P."/>
            <person name="Hou H."/>
            <person name="Lin Y."/>
            <person name="Liu Y."/>
            <person name="Li Z."/>
            <person name="Gong R."/>
            <person name="Feng X."/>
            <person name="Zhou L."/>
            <person name="Zhang W."/>
            <person name="Dong Y."/>
            <person name="Yang H."/>
            <person name="Lin H."/>
            <person name="Wang Y."/>
            <person name="Chen C.D."/>
            <person name="Xu Y."/>
        </authorList>
    </citation>
    <scope>X-RAY CRYSTALLOGRAPHY (2.3 ANGSTROMS) OF 205-719 IN COMPLEX WITH ZINC; IRON AND METHYLATED H3 PEPTIDES</scope>
    <scope>ZINC-BINDING</scope>
    <scope>FUNCTION</scope>
    <scope>CATALYTIC ACTIVITY</scope>
    <scope>COFACTOR</scope>
    <scope>DOMAIN PHD-FINGER</scope>
    <scope>MUTAGENESIS OF ASP-209; TRP-254; ASP-258; GLN-261; TRP-263; ASP-402; GLN-409; THR-411; SER-437; PHE-495; ASP-510; TYR-518; GLU-544; ASN-594 AND 622-GLU--PHE-624</scope>
</reference>
<reference key="7">
    <citation type="journal article" date="2011" name="Cancer Cell">
        <title>Oncometabolite 2-hydroxyglutarate is a competitive inhibitor of alpha-ketoglutarate-dependent dioxygenases.</title>
        <authorList>
            <person name="Xu W."/>
            <person name="Yang H."/>
            <person name="Liu Y."/>
            <person name="Yang Y."/>
            <person name="Wang P."/>
            <person name="Kim S.H."/>
            <person name="Ito S."/>
            <person name="Yang C."/>
            <person name="Wang P."/>
            <person name="Xiao M.T."/>
            <person name="Liu L.X."/>
            <person name="Jiang W.Q."/>
            <person name="Liu J."/>
            <person name="Zhang J.Y."/>
            <person name="Wang B."/>
            <person name="Frye S."/>
            <person name="Zhang Y."/>
            <person name="Xu Y.H."/>
            <person name="Lei Q.Y."/>
            <person name="Guan K.L."/>
            <person name="Zhao S.M."/>
            <person name="Xiong Y."/>
        </authorList>
    </citation>
    <scope>X-RAY CRYSTALLOGRAPHY (2.10 ANGSTROMS) OF 201-724 IN COMPLEX WITH SUBSTRATE; INHIBITOR; IRON AND ZINC</scope>
    <scope>ACTIVITY REGULATION</scope>
</reference>
<gene>
    <name type="primary">jmjd-1.2</name>
    <name type="ORF">F29B9.2</name>
</gene>
<keyword id="KW-0002">3D-structure</keyword>
<keyword id="KW-0025">Alternative splicing</keyword>
<keyword id="KW-0156">Chromatin regulator</keyword>
<keyword id="KW-0223">Dioxygenase</keyword>
<keyword id="KW-0408">Iron</keyword>
<keyword id="KW-0479">Metal-binding</keyword>
<keyword id="KW-0539">Nucleus</keyword>
<keyword id="KW-0560">Oxidoreductase</keyword>
<keyword id="KW-1185">Reference proteome</keyword>
<keyword id="KW-0804">Transcription</keyword>
<keyword id="KW-0805">Transcription regulation</keyword>
<keyword id="KW-0862">Zinc</keyword>
<keyword id="KW-0863">Zinc-finger</keyword>
<protein>
    <recommendedName>
        <fullName>Lysine-specific demethylase 7 homolog</fullName>
        <shortName>ceKDM7A</shortName>
        <ecNumber>1.14.11.-</ecNumber>
    </recommendedName>
    <alternativeName>
        <fullName>JmjC domain-containing protein 1.2</fullName>
    </alternativeName>
    <alternativeName>
        <fullName>PHD finger protein 8 homolog</fullName>
    </alternativeName>
    <alternativeName>
        <fullName>PHF8 homolog</fullName>
    </alternativeName>
</protein>
<comment type="function">
    <text evidence="3 4 5">Histone demethylase required for nervous system development (PubMed:20346720). Specifically demethylates dimethylated 'Lys-9', 'Lys-23' and 'Lys-27' (H3K9me2, H3K23me2 and H3K27me2, respectively) of histone H3, thereby playing a central role in histone code (PubMed:20346720, PubMed:20567262, PubMed:21251613, PubMed:26476455). Promotes mitochondrial stress-induced longevity (PubMed:27133168).</text>
</comment>
<comment type="cofactor">
    <cofactor evidence="4">
        <name>Fe(2+)</name>
        <dbReference type="ChEBI" id="CHEBI:29033"/>
    </cofactor>
    <text evidence="4">Binds 1 Fe(2+) ion per subunit.</text>
</comment>
<comment type="activity regulation">
    <text evidence="6">Competitively inhibited by 2-hydroxyglutarate.</text>
</comment>
<comment type="subcellular location">
    <subcellularLocation>
        <location evidence="3">Nucleus</location>
    </subcellularLocation>
</comment>
<comment type="alternative products">
    <event type="alternative splicing"/>
    <isoform>
        <id>Q9GYI0-1</id>
        <name>a</name>
        <sequence type="displayed"/>
    </isoform>
    <isoform>
        <id>Q9GYI0-2</id>
        <name>b</name>
        <sequence type="described" ref="VSP_039912"/>
    </isoform>
</comment>
<comment type="tissue specificity">
    <text evidence="3">Mainly expressed in neurons. Also weakly expressed in some muscle, intestinal and hypodermal cells.</text>
</comment>
<comment type="domain">
    <text evidence="4 5">The PHD-type zinc finger mediates binding to H3K4me3.</text>
</comment>
<comment type="disruption phenotype">
    <text evidence="3 7">Impaired locomotion (PubMed:20346720). While wild-type animals move by alternating dorsal and ventral flexions along the body length, producing a regular sinusoidal track on bacteria, the track pattern left by mutants is irregular, with increased wavelength (distance between successive peaks of a wave) but unchanged amplitude of the wave (PubMed:20346720). An increase of H3K9me2 and H3K27me2 levels is observed (PubMed:20346720). RNAi-mediated knockdown suppresses mitochondrial stress-mediated longevity (PubMed:27133168).</text>
</comment>
<comment type="similarity">
    <text evidence="8">Belongs to the JHDM1 histone demethylase family. JHDM1D subfamily.</text>
</comment>